<accession>P16379</accession>
<accession>Q8B544</accession>
<dbReference type="EC" id="2.7.7.48" evidence="2"/>
<dbReference type="EC" id="3.6.1.-" evidence="1"/>
<dbReference type="EC" id="2.7.7.88" evidence="1"/>
<dbReference type="EC" id="2.1.1.375" evidence="1"/>
<dbReference type="EMBL" id="M29788">
    <property type="protein sequence ID" value="AAA48442.1"/>
    <property type="molecule type" value="Genomic_RNA"/>
</dbReference>
<dbReference type="EMBL" id="AY074804">
    <property type="protein sequence ID" value="AAL73076.1"/>
    <property type="molecule type" value="mRNA"/>
</dbReference>
<dbReference type="PIR" id="A46309">
    <property type="entry name" value="A46309"/>
</dbReference>
<dbReference type="SMR" id="P16379"/>
<dbReference type="Proteomes" id="UP000007626">
    <property type="component" value="Genome"/>
</dbReference>
<dbReference type="GO" id="GO:0030430">
    <property type="term" value="C:host cell cytoplasm"/>
    <property type="evidence" value="ECO:0007669"/>
    <property type="project" value="UniProtKB-SubCell"/>
</dbReference>
<dbReference type="GO" id="GO:0044423">
    <property type="term" value="C:virion component"/>
    <property type="evidence" value="ECO:0007669"/>
    <property type="project" value="UniProtKB-KW"/>
</dbReference>
<dbReference type="GO" id="GO:0005524">
    <property type="term" value="F:ATP binding"/>
    <property type="evidence" value="ECO:0007669"/>
    <property type="project" value="UniProtKB-KW"/>
</dbReference>
<dbReference type="GO" id="GO:0003924">
    <property type="term" value="F:GTPase activity"/>
    <property type="evidence" value="ECO:0007669"/>
    <property type="project" value="RHEA"/>
</dbReference>
<dbReference type="GO" id="GO:0046872">
    <property type="term" value="F:metal ion binding"/>
    <property type="evidence" value="ECO:0007669"/>
    <property type="project" value="UniProtKB-KW"/>
</dbReference>
<dbReference type="GO" id="GO:0004482">
    <property type="term" value="F:mRNA 5'-cap (guanine-N7-)-methyltransferase activity"/>
    <property type="evidence" value="ECO:0007669"/>
    <property type="project" value="InterPro"/>
</dbReference>
<dbReference type="GO" id="GO:0003968">
    <property type="term" value="F:RNA-directed RNA polymerase activity"/>
    <property type="evidence" value="ECO:0007669"/>
    <property type="project" value="UniProtKB-KW"/>
</dbReference>
<dbReference type="GO" id="GO:0039689">
    <property type="term" value="P:negative stranded viral RNA replication"/>
    <property type="evidence" value="ECO:0000250"/>
    <property type="project" value="UniProtKB"/>
</dbReference>
<dbReference type="FunFam" id="3.40.50.150:FF:000473">
    <property type="entry name" value="RNA-directed RNA polymerase L"/>
    <property type="match status" value="1"/>
</dbReference>
<dbReference type="Gene3D" id="3.40.50.150">
    <property type="entry name" value="Vaccinia Virus protein VP39"/>
    <property type="match status" value="1"/>
</dbReference>
<dbReference type="InterPro" id="IPR039530">
    <property type="entry name" value="L_methyltransferase_rhabdo"/>
</dbReference>
<dbReference type="InterPro" id="IPR039736">
    <property type="entry name" value="L_poly_C"/>
</dbReference>
<dbReference type="InterPro" id="IPR048398">
    <property type="entry name" value="Methyltrans_Mon_C"/>
</dbReference>
<dbReference type="InterPro" id="IPR048397">
    <property type="entry name" value="Methyltrans_Mon_CD"/>
</dbReference>
<dbReference type="InterPro" id="IPR026890">
    <property type="entry name" value="Mononeg_mRNAcap"/>
</dbReference>
<dbReference type="InterPro" id="IPR014023">
    <property type="entry name" value="Mononeg_RNA_pol_cat"/>
</dbReference>
<dbReference type="InterPro" id="IPR025786">
    <property type="entry name" value="Mononega_L_MeTrfase"/>
</dbReference>
<dbReference type="InterPro" id="IPR017234">
    <property type="entry name" value="RNA-dir_pol_rhabdovirus"/>
</dbReference>
<dbReference type="InterPro" id="IPR029063">
    <property type="entry name" value="SAM-dependent_MTases_sf"/>
</dbReference>
<dbReference type="NCBIfam" id="TIGR04198">
    <property type="entry name" value="paramyx_RNAcap"/>
    <property type="match status" value="1"/>
</dbReference>
<dbReference type="Pfam" id="PF21080">
    <property type="entry name" value="Methyltrans_Mon_1st"/>
    <property type="match status" value="1"/>
</dbReference>
<dbReference type="Pfam" id="PF14314">
    <property type="entry name" value="Methyltrans_Mon_2nd"/>
    <property type="match status" value="1"/>
</dbReference>
<dbReference type="Pfam" id="PF21081">
    <property type="entry name" value="Methyltrans_Mon_3rd"/>
    <property type="match status" value="1"/>
</dbReference>
<dbReference type="Pfam" id="PF14318">
    <property type="entry name" value="Mononeg_mRNAcap"/>
    <property type="match status" value="1"/>
</dbReference>
<dbReference type="Pfam" id="PF00946">
    <property type="entry name" value="Mononeg_RNA_pol"/>
    <property type="match status" value="1"/>
</dbReference>
<dbReference type="PIRSF" id="PIRSF037546">
    <property type="entry name" value="RNA_pol_RhabdoV_sub"/>
    <property type="match status" value="1"/>
</dbReference>
<dbReference type="PROSITE" id="PS50526">
    <property type="entry name" value="RDRP_SSRNA_NEG_NONSEG"/>
    <property type="match status" value="1"/>
</dbReference>
<dbReference type="PROSITE" id="PS51590">
    <property type="entry name" value="SAM_MT_MNV_L"/>
    <property type="match status" value="1"/>
</dbReference>
<name>L_VSNJO</name>
<organism>
    <name type="scientific">Vesicular stomatitis New Jersey virus (strain Ogden subtype Concan)</name>
    <name type="common">VSNJV</name>
    <dbReference type="NCBI Taxonomy" id="11283"/>
    <lineage>
        <taxon>Viruses</taxon>
        <taxon>Riboviria</taxon>
        <taxon>Orthornavirae</taxon>
        <taxon>Negarnaviricota</taxon>
        <taxon>Haploviricotina</taxon>
        <taxon>Monjiviricetes</taxon>
        <taxon>Mononegavirales</taxon>
        <taxon>Rhabdoviridae</taxon>
        <taxon>Alpharhabdovirinae</taxon>
        <taxon>Vesiculovirus</taxon>
        <taxon>Vesiculovirus newjersey</taxon>
    </lineage>
</organism>
<reference key="1">
    <citation type="journal article" date="1990" name="Virology">
        <title>Nucleotide sequence analysis of the L gene of vesicular stomatitis virus (New Jersey serotype): identification of conserved domains in L proteins of nonsegmented negative-strand RNA viruses.</title>
        <authorList>
            <person name="Barik S."/>
            <person name="Rud E.W."/>
            <person name="Luk D."/>
            <person name="Banerjee A.K."/>
            <person name="Kang C.Y."/>
        </authorList>
    </citation>
    <scope>NUCLEOTIDE SEQUENCE [GENOMIC RNA]</scope>
</reference>
<reference key="2">
    <citation type="submission" date="2002-01" db="EMBL/GenBank/DDBJ databases">
        <title>Cloning and expression of functional L proteins of VSV NJ-Haz and VSV NJ-Ogd.</title>
        <authorList>
            <person name="Kang C.Y."/>
            <person name="Kim G.N."/>
        </authorList>
    </citation>
    <scope>NUCLEOTIDE SEQUENCE [MRNA]</scope>
</reference>
<proteinExistence type="evidence at transcript level"/>
<gene>
    <name type="primary">L</name>
</gene>
<organismHost>
    <name type="scientific">Aedes</name>
    <dbReference type="NCBI Taxonomy" id="7158"/>
</organismHost>
<organismHost>
    <name type="scientific">Bos taurus</name>
    <name type="common">Bovine</name>
    <dbReference type="NCBI Taxonomy" id="9913"/>
</organismHost>
<organismHost>
    <name type="scientific">Culicoides</name>
    <dbReference type="NCBI Taxonomy" id="58271"/>
</organismHost>
<organismHost>
    <name type="scientific">Equus asinus</name>
    <name type="common">Donkey</name>
    <name type="synonym">Equus africanus asinus</name>
    <dbReference type="NCBI Taxonomy" id="9793"/>
</organismHost>
<organismHost>
    <name type="scientific">Equus caballus</name>
    <name type="common">Horse</name>
    <dbReference type="NCBI Taxonomy" id="9796"/>
</organismHost>
<organismHost>
    <name type="scientific">Homo sapiens</name>
    <name type="common">Human</name>
    <dbReference type="NCBI Taxonomy" id="9606"/>
</organismHost>
<organismHost>
    <name type="scientific">Lutzomyia</name>
    <dbReference type="NCBI Taxonomy" id="252607"/>
</organismHost>
<organismHost>
    <name type="scientific">Musca domestica</name>
    <name type="common">House fly</name>
    <dbReference type="NCBI Taxonomy" id="7370"/>
</organismHost>
<organismHost>
    <name type="scientific">Simuliidae</name>
    <name type="common">black flies</name>
    <dbReference type="NCBI Taxonomy" id="7190"/>
</organismHost>
<organismHost>
    <name type="scientific">Sus scrofa</name>
    <name type="common">Pig</name>
    <dbReference type="NCBI Taxonomy" id="9823"/>
</organismHost>
<comment type="function">
    <text evidence="1 2">Multifunctional enzyme responsible for RNA synthesis (replicase and transcriptase), cap addition, and cap methylation. Also performs the polyadenylation of subgenomic mRNAs by a stuttering mechanism at a slipery stop site present at the end of viral genes. The template is composed of the viral RNA tightly encapsidated by the nucleoprotein (N). L is packaged into virions during assembly and translocates to the 3' leader promoter to initiate transcription after entering the host cells. During transcription and replication of the genome, L does not bind the N-RNA complex directly, but is bridged by its non-catalytic cofactor P, which interacts with L and N oligomers simultaneously (By similarity). In the transcription mode, the polymerase performs the sequential transcription of all mRNAs using a termination-reinitiation mechanism responding to gene start and gene end signals. Some polymerase disengage from the template at each gene junction, resulting in a decreasing abundance of transcripts from the 3' to the 5' end of the genome (By similarity). The first gene is the most transcribed, and the last the least transcribed (By similarity). The viral phosphoprotein helps the polymerase to engage the N-RNA template and acts as a processivity factor. Polyribonucleotidyl transferase (PRNTase) adds the cap structure when the nascent RNA chain length has reached few nucleotides. Ribose 2'-O methylation of viral mRNA cap precedes and facilitates subsequent guanine-N-7 methylation, both activities being carried by the viral polymerase (By similarity). In the replication mode, the polymerase replicates the whole viral genome without recognizing the gene end transcriptional signals (By similarity). The ability of the polymerase to override the gene end signals as it is producing the antigenome is probably due to replicative RNA becoming encapsidated with nucleoprotein as it is synthesized (By similarity).</text>
</comment>
<comment type="catalytic activity">
    <reaction evidence="4">
        <text>RNA(n) + a ribonucleoside 5'-triphosphate = RNA(n+1) + diphosphate</text>
        <dbReference type="Rhea" id="RHEA:21248"/>
        <dbReference type="Rhea" id="RHEA-COMP:14527"/>
        <dbReference type="Rhea" id="RHEA-COMP:17342"/>
        <dbReference type="ChEBI" id="CHEBI:33019"/>
        <dbReference type="ChEBI" id="CHEBI:61557"/>
        <dbReference type="ChEBI" id="CHEBI:140395"/>
        <dbReference type="EC" id="2.7.7.48"/>
    </reaction>
</comment>
<comment type="catalytic activity">
    <reaction evidence="1">
        <text>GTP + H2O = GDP + phosphate + H(+)</text>
        <dbReference type="Rhea" id="RHEA:19669"/>
        <dbReference type="ChEBI" id="CHEBI:15377"/>
        <dbReference type="ChEBI" id="CHEBI:15378"/>
        <dbReference type="ChEBI" id="CHEBI:37565"/>
        <dbReference type="ChEBI" id="CHEBI:43474"/>
        <dbReference type="ChEBI" id="CHEBI:58189"/>
    </reaction>
</comment>
<comment type="catalytic activity">
    <reaction evidence="1">
        <text>a 5'-end triphospho-adenylyl-adenylyl-cytidylyl-adenosine in mRNA + GDP + H(+) = a 5'-end (5'-triphosphoguanosine)-adenylyl-adenylyl-cytidylyl-adenosine in mRNA + diphosphate</text>
        <dbReference type="Rhea" id="RHEA:65436"/>
        <dbReference type="Rhea" id="RHEA-COMP:16797"/>
        <dbReference type="Rhea" id="RHEA-COMP:16799"/>
        <dbReference type="ChEBI" id="CHEBI:15378"/>
        <dbReference type="ChEBI" id="CHEBI:33019"/>
        <dbReference type="ChEBI" id="CHEBI:58189"/>
        <dbReference type="ChEBI" id="CHEBI:156484"/>
        <dbReference type="ChEBI" id="CHEBI:156503"/>
        <dbReference type="EC" id="2.7.7.88"/>
    </reaction>
</comment>
<comment type="catalytic activity">
    <reaction evidence="1">
        <text>a 5'-end (5'-triphosphoguanosine)-adenylyl-adenylyl-cytidylyl-adenosine in mRNA + 2 S-adenosyl-L-methionine = a 5'-end (N(7)-methyl 5'-triphosphoguanosine)-(2'-O-methyladenylyl)-adenylyl-cytidylyl-adenosine in mRNA + 2 S-adenosyl-L-homocysteine + H(+)</text>
        <dbReference type="Rhea" id="RHEA:65376"/>
        <dbReference type="Rhea" id="RHEA-COMP:16797"/>
        <dbReference type="Rhea" id="RHEA-COMP:16798"/>
        <dbReference type="ChEBI" id="CHEBI:15378"/>
        <dbReference type="ChEBI" id="CHEBI:57856"/>
        <dbReference type="ChEBI" id="CHEBI:59789"/>
        <dbReference type="ChEBI" id="CHEBI:156483"/>
        <dbReference type="ChEBI" id="CHEBI:156484"/>
        <dbReference type="EC" id="2.1.1.375"/>
    </reaction>
</comment>
<comment type="catalytic activity">
    <reaction evidence="1">
        <text>a 5'-end (5'-triphosphoguanosine)-adenylyl-adenylyl-cytidylyl-adenosine in mRNA + S-adenosyl-L-methionine = a 5'-end (5'-triphosphoguanosine)-(2'-O-methyladenylyl)-adenylyl-cytidylyl-adenosine in mRNA + S-adenosyl-L-homocysteine + H(+)</text>
        <dbReference type="Rhea" id="RHEA:65380"/>
        <dbReference type="Rhea" id="RHEA-COMP:16797"/>
        <dbReference type="Rhea" id="RHEA-COMP:16801"/>
        <dbReference type="ChEBI" id="CHEBI:15378"/>
        <dbReference type="ChEBI" id="CHEBI:57856"/>
        <dbReference type="ChEBI" id="CHEBI:59789"/>
        <dbReference type="ChEBI" id="CHEBI:156482"/>
        <dbReference type="ChEBI" id="CHEBI:156484"/>
    </reaction>
</comment>
<comment type="catalytic activity">
    <reaction evidence="1">
        <text>a 5'-end (5'-triphosphoguanosine)-(2'-O-methyladenylyl)-adenylyl-cytidylyl-adenosine in mRNA + S-adenosyl-L-methionine = a 5'-end (N(7)-methyl 5'-triphosphoguanosine)-(2'-O-methyladenylyl)-adenylyl-cytidylyl-adenosine in mRNA + S-adenosyl-L-homocysteine</text>
        <dbReference type="Rhea" id="RHEA:65440"/>
        <dbReference type="Rhea" id="RHEA-COMP:16798"/>
        <dbReference type="Rhea" id="RHEA-COMP:16801"/>
        <dbReference type="ChEBI" id="CHEBI:57856"/>
        <dbReference type="ChEBI" id="CHEBI:59789"/>
        <dbReference type="ChEBI" id="CHEBI:156482"/>
        <dbReference type="ChEBI" id="CHEBI:156483"/>
    </reaction>
</comment>
<comment type="activity regulation">
    <text evidence="1">The GDP polyribonucleotidyltransferase activity is inhibited by the GDP analog DAPDP.</text>
</comment>
<comment type="subunit">
    <text evidence="1">May form homodimer. Interacts with the P protein; the association of P and L forms the polymerase complex, positions it on the template and allows to package the L polymerase in the virion, since P acts as a bridge between N and L. L binds loosely to N and is further bridged by the P protein, which interacts with L and N oligomers simultaneously.</text>
</comment>
<comment type="subcellular location">
    <subcellularLocation>
        <location evidence="1">Virion</location>
    </subcellularLocation>
    <subcellularLocation>
        <location evidence="1">Host cytoplasm</location>
    </subcellularLocation>
    <text evidence="1">L and P are packaged asymmetrically towards the blunt end of the virus. About 55 copies of L are present in the virion.</text>
</comment>
<comment type="domain">
    <text evidence="1">The RNA-dependent RNA polymerase (RdRp) domain is responsible for the RNA sythesis. The polyribonucleotidyl transferase (PRNTase) domain is responsible for the initiation of transcription at the 3'-end of the genome (priming) and pre-mRNA 5'-capping during start-stop transcription. The methyltransferase (MTase) domain is responsible for the cap methylation.</text>
</comment>
<comment type="similarity">
    <text evidence="6">Belongs to the rhabdoviridae protein L family.</text>
</comment>
<keyword id="KW-0067">ATP-binding</keyword>
<keyword id="KW-1035">Host cytoplasm</keyword>
<keyword id="KW-0378">Hydrolase</keyword>
<keyword id="KW-0460">Magnesium</keyword>
<keyword id="KW-0479">Metal-binding</keyword>
<keyword id="KW-0489">Methyltransferase</keyword>
<keyword id="KW-0506">mRNA capping</keyword>
<keyword id="KW-0507">mRNA processing</keyword>
<keyword id="KW-0511">Multifunctional enzyme</keyword>
<keyword id="KW-0547">Nucleotide-binding</keyword>
<keyword id="KW-0548">Nucleotidyltransferase</keyword>
<keyword id="KW-1185">Reference proteome</keyword>
<keyword id="KW-0696">RNA-directed RNA polymerase</keyword>
<keyword id="KW-0949">S-adenosyl-L-methionine</keyword>
<keyword id="KW-0808">Transferase</keyword>
<keyword id="KW-0693">Viral RNA replication</keyword>
<keyword id="KW-0946">Virion</keyword>
<keyword id="KW-0862">Zinc</keyword>
<sequence>MDFDLIEDSANWEDDESDFFLRDILSQEDQMSYLNTADYNLNSPLISDDMVYIIKRMNHEEVPPIWRSKEWDSPLDMLRGCQAQPMSHQEMHNWFGTWIQNIQHDSAQGFTFLKEVDKESEMTYDLVSTFLKGWVGKDYPFKSKNKEIDSMALVGPLCQKFLDLHKITLILNAVSLGETKELLATFKGKYRMSCENIPIARLRLPSLGPVFMCKGWTYIHKERVLMDRNFLLMCKDVIIGRMQTFLSMIGRSDNKFSPDQIYTLANVYRIGDKILEQCGNKAYDLIKMIEPICNLKMMELARLHRPKIPKFPHFEEHVKGSVRELTQRSNRIQTLYDLIMSMKDVDLVLVVYGSFRHWGHPFIDYFEGLEKLHTQVNMEKHIDKEYPQQLASDLARLVLNKQFSESKKWFVDPSKMSPKHPFYEHVINKTWPTAAKIQDFGDNWHKLPLIQCFEIPDLIDPSVIYSDKSHSMNKKEVIQHVRSKPNIPIPSKKVLQTMLTNRATNWKAFLKDIDENGLDDDDLIIGLKGKERELKIAGRFFSLMSWRLREYFVITEYLIKTYYVPLFKGLTMADDLTSVIKKMMDSSSGQGLDDYSSVCLANHIDYEKWNNHQRKESNGPIFRVMGQFLGYPSLIERTHEFFEKSLIYYNGRPDLMTIRNGTLCNSTKHRVCWNGQKGGLEGLRQKGWSIVNLLVIQREAKIRNTAVKVLAQGDNQVICTQYKTKKTRSELELRAVLHQMAGNNNKIMEEIKRGTEKLGLIINDDETMQSADYLNYGKIPIFRGVIRGLETKRWSRVTCVTNDQIPTCANLMSSVSTNALTVAHFAENPINAMIQYNYFGTFARLLLFMHDPAIRQSLYKVQDKIPGLHTRTFKYAMLYLDPSIGGVCGMALSRFLIRAFPDPVTESLSFWKFIYEHASEPHLRKMAVMFGDPPIAKFRIEHINKLLEDPTSLNISMGMSPANLLKSEVKKCLIESRSSIKNEIIKDATIYMHQEEEKLRGFLWSIKPLFPRFLSEFKAGTFLGVSEGLINLFQNSRTIRNSFKKRYHKDLDELIIKSEISSLSHLGSMHYRLGDNQIWSCSASRADILRYKSWTRKVVGTTVPHPLEMHGPPSKKERPCQLCNSSGLTYISVHCPKGIIDVFNRRGPLPAYLGSNTSESTSILQPWEKESKIPIIKRATRLRDAISWFIPPESPLSTCILNNIQALTGEDWSSKQHGFKRTGSALHRFSTSRMSNGGFASQSPATLTRMIATTDTMRDFGTKNYDFMFQASLLYGQMTTSISRYGTPGSCTDHYHIRCKGCIREIEEVELNTSLEYKTPDVSHILEKWRNNTGSWGHQIKQLKPAEGNWESLSPVEQSYQVARCIGFLYGELTHKKSRQADDSSLFPLSIQLKVRGRGFLRGLLDGLMRSSCCQVIHRRSVSTLKRPANAVYGGLIYLIDKLSASSPFLSLVRTGPIRQELEQVPHKMSTSYPTNIRDLGSIVRNYFKYQCRPVERGNYKTCYNQIWLFSDVLSTEFIGPMAISSSLLRLLYRPSLTKKDREELRELAALSSNLRSGEDWDDSHIKFFSNDLLFCSQEIRHACKFGIKKDNEDITFYPNWGTEYIGNVIDIPVFYRAQNVKKDIKVPPRIQNPLMSGLRLGQLPTGAHYKMRAIVFRLKIPYHDFLACGDGSGGMTAALLRYNRTSRGIFNSLLDLSDTMLRGSSPEPPSALETLGGERVRCVNGDSCWEHPSDLSDENTWKYFLHLKKGCGMSINLITMDMEVQDSVISYKIESLVRQYVPVLLESDGCLIYKTYGTYIATQEDNSLTLIGSLFHSVQLVQTDLSSSNTSELYLVCRGLKDYVDTPFVDWIELYDNWEKQYAFRSFKDEFQRAQSLTPETTLIGIPPQFVPDPGVNLETLFQIAGVPTGVAHGITHHILQSKDKLISNAIGSMCVISHFTINTIRTTDSMPGPPSDGDVNKMCSALIGTCFWLSWMESDLNLYKTCLRSIMKSMPVRWFRTLKNEKWSQKWDCKGDAIPKDSRLGDSLANIGNWIRAWELIRNGNKSEPFDSMVAEALPKSVDKSLSWRKISKSTGIPRLLNSDIDLVDQSILNVQIDIVENQAWQN</sequence>
<evidence type="ECO:0000250" key="1">
    <source>
        <dbReference type="UniProtKB" id="P03523"/>
    </source>
</evidence>
<evidence type="ECO:0000250" key="2">
    <source>
        <dbReference type="UniProtKB" id="P28887"/>
    </source>
</evidence>
<evidence type="ECO:0000255" key="3"/>
<evidence type="ECO:0000255" key="4">
    <source>
        <dbReference type="PROSITE-ProRule" id="PRU00539"/>
    </source>
</evidence>
<evidence type="ECO:0000255" key="5">
    <source>
        <dbReference type="PROSITE-ProRule" id="PRU00923"/>
    </source>
</evidence>
<evidence type="ECO:0000305" key="6"/>
<feature type="chain" id="PRO_0000222843" description="RNA-directed RNA polymerase L">
    <location>
        <begin position="1"/>
        <end position="2109"/>
    </location>
</feature>
<feature type="domain" description="RdRp catalytic" evidence="4">
    <location>
        <begin position="598"/>
        <end position="784"/>
    </location>
</feature>
<feature type="domain" description="Mononegavirus-type SAM-dependent 2'-O-MTase" evidence="5">
    <location>
        <begin position="1640"/>
        <end position="1837"/>
    </location>
</feature>
<feature type="region of interest" description="Capping domain" evidence="1">
    <location>
        <begin position="866"/>
        <end position="1334"/>
    </location>
</feature>
<feature type="region of interest" description="PRNTase domain" evidence="1">
    <location>
        <begin position="1081"/>
        <end position="1331"/>
    </location>
</feature>
<feature type="region of interest" description="priming-capping loop" evidence="1">
    <location>
        <begin position="1152"/>
        <end position="1189"/>
    </location>
</feature>
<feature type="region of interest" description="Connector domain" evidence="1">
    <location>
        <begin position="1358"/>
        <end position="1557"/>
    </location>
</feature>
<feature type="active site" description="Nucleophile; for GDP polyribonucleotidyltransferase" evidence="1">
    <location>
        <position position="1227"/>
    </location>
</feature>
<feature type="active site" description="For mRNA (nucleoside-2'-O-)-methyltransferase 2" evidence="1">
    <location>
        <position position="1651"/>
    </location>
</feature>
<feature type="active site" description="For mRNA (guanine-N(7)-)-methyltransferase and mRNA (nucleoside-2'-O-)-methyltransferase 2" evidence="1">
    <location>
        <position position="1762"/>
    </location>
</feature>
<feature type="active site" description="For mRNA (nucleoside-2'-O-)-methyltransferase 2" evidence="1">
    <location>
        <position position="1795"/>
    </location>
</feature>
<feature type="active site" description="For mRNA (nucleoside-2'-O-)-methyltransferase 2" evidence="1">
    <location>
        <position position="1833"/>
    </location>
</feature>
<feature type="binding site" evidence="2">
    <location>
        <position position="605"/>
    </location>
    <ligand>
        <name>Mg(2+)</name>
        <dbReference type="ChEBI" id="CHEBI:18420"/>
        <note>catalytic; for RNA-directed RNA polymerase activity</note>
    </ligand>
</feature>
<feature type="binding site" evidence="2">
    <location>
        <position position="714"/>
    </location>
    <ligand>
        <name>Mg(2+)</name>
        <dbReference type="ChEBI" id="CHEBI:18420"/>
        <note>catalytic; for RNA-directed RNA polymerase activity</note>
    </ligand>
</feature>
<feature type="binding site" evidence="1">
    <location>
        <position position="1081"/>
    </location>
    <ligand>
        <name>Zn(2+)</name>
        <dbReference type="ChEBI" id="CHEBI:29105"/>
        <note>structural</note>
    </ligand>
</feature>
<feature type="binding site" evidence="1">
    <location>
        <position position="1108"/>
    </location>
    <ligand>
        <name>Zn(2+)</name>
        <dbReference type="ChEBI" id="CHEBI:29105"/>
        <note>structural</note>
    </ligand>
</feature>
<feature type="binding site" evidence="1">
    <location>
        <position position="1120"/>
    </location>
    <ligand>
        <name>Zn(2+)</name>
        <dbReference type="ChEBI" id="CHEBI:29105"/>
        <label>2</label>
        <note>structural</note>
    </ligand>
</feature>
<feature type="binding site" evidence="1">
    <location>
        <position position="1123"/>
    </location>
    <ligand>
        <name>Zn(2+)</name>
        <dbReference type="ChEBI" id="CHEBI:29105"/>
        <label>2</label>
        <note>structural</note>
    </ligand>
</feature>
<feature type="binding site" evidence="1">
    <location>
        <position position="1294"/>
    </location>
    <ligand>
        <name>Zn(2+)</name>
        <dbReference type="ChEBI" id="CHEBI:29105"/>
        <label>2</label>
        <note>structural</note>
    </ligand>
</feature>
<feature type="binding site" evidence="1">
    <location>
        <position position="1296"/>
    </location>
    <ligand>
        <name>Zn(2+)</name>
        <dbReference type="ChEBI" id="CHEBI:29105"/>
        <label>2</label>
        <note>structural</note>
    </ligand>
</feature>
<feature type="binding site" evidence="1">
    <location>
        <position position="1299"/>
    </location>
    <ligand>
        <name>Zn(2+)</name>
        <dbReference type="ChEBI" id="CHEBI:29105"/>
        <note>structural</note>
    </ligand>
</feature>
<feature type="binding site" evidence="1">
    <location>
        <position position="1302"/>
    </location>
    <ligand>
        <name>Zn(2+)</name>
        <dbReference type="ChEBI" id="CHEBI:29105"/>
        <note>structural</note>
    </ligand>
</feature>
<feature type="binding site" evidence="3">
    <location>
        <begin position="1667"/>
        <end position="1676"/>
    </location>
    <ligand>
        <name>ATP</name>
        <dbReference type="ChEBI" id="CHEBI:30616"/>
    </ligand>
</feature>
<feature type="site" description="Interaction with the phosphoprotein" evidence="1">
    <location>
        <position position="704"/>
    </location>
</feature>
<feature type="site" description="Important for escaping from the 3'-terminal leader promotter followed by the formation of a stable leaderRNA elongation complex" evidence="1">
    <location>
        <position position="1183"/>
    </location>
</feature>
<feature type="site" description="Interaction with the phosphoprotein" evidence="1">
    <location>
        <position position="1419"/>
    </location>
</feature>
<feature type="site" description="Interaction with the phosphoprotein" evidence="1">
    <location>
        <position position="1427"/>
    </location>
</feature>
<feature type="site" description="Interaction with the phosphoprotein" evidence="1">
    <location>
        <position position="1496"/>
    </location>
</feature>
<feature type="site" description="Interaction with the phosphoprotein" evidence="1">
    <location>
        <position position="1911"/>
    </location>
</feature>
<feature type="site" description="Interaction with the phosphoprotein" evidence="1">
    <location>
        <position position="1981"/>
    </location>
</feature>
<feature type="site" description="Interaction with the phosphoprotein" evidence="1">
    <location>
        <position position="2022"/>
    </location>
</feature>
<feature type="sequence conflict" description="In Ref. 1; AAA48442." evidence="6" ref="1">
    <original>I</original>
    <variation>V</variation>
    <location>
        <position position="102"/>
    </location>
</feature>
<feature type="sequence conflict" description="In Ref. 1; AAA48442." evidence="6" ref="1">
    <original>G</original>
    <variation>P</variation>
    <location>
        <position position="109"/>
    </location>
</feature>
<feature type="sequence conflict" description="In Ref. 1; AAA48442." evidence="6" ref="1">
    <original>A</original>
    <variation>T</variation>
    <location>
        <position position="184"/>
    </location>
</feature>
<feature type="sequence conflict" description="In Ref. 1; AAA48442." evidence="6" ref="1">
    <original>NFLLMC</original>
    <variation>TSFSCV</variation>
    <location>
        <begin position="229"/>
        <end position="234"/>
    </location>
</feature>
<feature type="sequence conflict" description="In Ref. 1; AAA48442." evidence="6" ref="1">
    <original>R</original>
    <variation>Q</variation>
    <location>
        <position position="323"/>
    </location>
</feature>
<feature type="sequence conflict" description="In Ref. 1; AAA48442." evidence="6" ref="1">
    <original>E</original>
    <variation>Q</variation>
    <location>
        <position position="367"/>
    </location>
</feature>
<feature type="sequence conflict" description="In Ref. 1; AAA48442." evidence="6" ref="1">
    <original>K</original>
    <variation>N</variation>
    <location>
        <position position="492"/>
    </location>
</feature>
<feature type="sequence conflict" description="In Ref. 1; AAA48442." evidence="6" ref="1">
    <original>D</original>
    <variation>E</variation>
    <location>
        <position position="863"/>
    </location>
</feature>
<feature type="sequence conflict" description="In Ref. 1; AAA48442." evidence="6" ref="1">
    <original>R</original>
    <variation>K</variation>
    <location>
        <position position="924"/>
    </location>
</feature>
<feature type="sequence conflict" description="In Ref. 1; AAA48442." evidence="6" ref="1">
    <original>A</original>
    <variation>E</variation>
    <location>
        <position position="927"/>
    </location>
</feature>
<feature type="sequence conflict" description="In Ref. 1; AAA48442." evidence="6" ref="1">
    <original>GDPPI</original>
    <variation>ETPQG</variation>
    <location>
        <begin position="931"/>
        <end position="935"/>
    </location>
</feature>
<feature type="sequence conflict" description="In Ref. 1; AAA48442." evidence="6" ref="1">
    <original>L</original>
    <variation>F</variation>
    <location>
        <position position="1029"/>
    </location>
</feature>
<feature type="sequence conflict" description="In Ref. 1; AAA48442." evidence="6" ref="1">
    <original>S</original>
    <variation>R</variation>
    <location>
        <position position="1058"/>
    </location>
</feature>
<feature type="sequence conflict" description="In Ref. 1; AAA48442." evidence="6" ref="1">
    <original>C</original>
    <variation>Y</variation>
    <location>
        <position position="1503"/>
    </location>
</feature>
<feature type="sequence conflict" description="In Ref. 1; AAA48442." evidence="6" ref="1">
    <original>A</original>
    <variation>R</variation>
    <location>
        <position position="1523"/>
    </location>
</feature>
<feature type="sequence conflict" description="In Ref. 1; AAA48442." evidence="6" ref="1">
    <original>S</original>
    <variation>L</variation>
    <location>
        <position position="1564"/>
    </location>
</feature>
<feature type="sequence conflict" description="In Ref. 1; AAA48442." evidence="6" ref="1">
    <original>I</original>
    <variation>T</variation>
    <location>
        <position position="1610"/>
    </location>
</feature>
<feature type="sequence conflict" description="In Ref. 1; AAA48442." evidence="6" ref="1">
    <original>K</original>
    <variation>R</variation>
    <location>
        <position position="1626"/>
    </location>
</feature>
<feature type="sequence conflict" description="In Ref. 1; AAA48442." evidence="6" ref="1">
    <original>A</original>
    <variation>D</variation>
    <location>
        <position position="1668"/>
    </location>
</feature>
<feature type="sequence conflict" description="In Ref. 1; AAA48442." evidence="6" ref="1">
    <original>G</original>
    <variation>R</variation>
    <location>
        <position position="1840"/>
    </location>
</feature>
<feature type="sequence conflict" description="In Ref. 1; AAA48442." evidence="6" ref="1">
    <original>T</original>
    <variation>H</variation>
    <location>
        <position position="1942"/>
    </location>
</feature>
<feature type="sequence conflict" description="In Ref. 1; AAA48442." evidence="6" ref="1">
    <original>T</original>
    <variation>A</variation>
    <location>
        <position position="1971"/>
    </location>
</feature>
<feature type="sequence conflict" description="In Ref. 1; AAA48442." evidence="6" ref="1">
    <original>S</original>
    <variation>D</variation>
    <location>
        <position position="1976"/>
    </location>
</feature>
<feature type="sequence conflict" description="In Ref. 1; AAA48442." evidence="6" ref="1">
    <original>T</original>
    <variation>H</variation>
    <location>
        <position position="1987"/>
    </location>
</feature>
<feature type="sequence conflict" description="In Ref. 1; AAA48442." evidence="6" ref="1">
    <original>P</original>
    <variation>T</variation>
    <location>
        <position position="2061"/>
    </location>
</feature>
<protein>
    <recommendedName>
        <fullName>RNA-directed RNA polymerase L</fullName>
        <shortName>Protein L</shortName>
    </recommendedName>
    <alternativeName>
        <fullName>Large structural protein</fullName>
    </alternativeName>
    <alternativeName>
        <fullName>Replicase</fullName>
    </alternativeName>
    <alternativeName>
        <fullName>Transcriptase</fullName>
    </alternativeName>
    <domain>
        <recommendedName>
            <fullName>RNA-directed RNA polymerase</fullName>
            <ecNumber evidence="2">2.7.7.48</ecNumber>
        </recommendedName>
    </domain>
    <domain>
        <recommendedName>
            <fullName evidence="6">GTP phosphohydrolase</fullName>
            <ecNumber evidence="1">3.6.1.-</ecNumber>
        </recommendedName>
    </domain>
    <domain>
        <recommendedName>
            <fullName evidence="6">GDP polyribonucleotidyltransferase</fullName>
            <ecNumber evidence="1">2.7.7.88</ecNumber>
        </recommendedName>
        <alternativeName>
            <fullName evidence="6">PRNTase</fullName>
        </alternativeName>
    </domain>
    <domain>
        <recommendedName>
            <fullName evidence="6">mRNA cap methyltransferase</fullName>
            <ecNumber evidence="1">2.1.1.375</ecNumber>
        </recommendedName>
        <alternativeName>
            <fullName evidence="1">mRNA (guanine-N(7)-)-methyltransferase</fullName>
            <shortName evidence="1">G-N7-MTase</shortName>
        </alternativeName>
        <alternativeName>
            <fullName evidence="1">mRNA (nucleoside-2'-O-)-methyltransferase</fullName>
            <shortName evidence="1">N1-2'-O-MTase</shortName>
        </alternativeName>
    </domain>
</protein>